<sequence length="421" mass="48581">MAENSNGALGCVVRCLSSESELQELCREEQLCCAELGVTRKNLSDFEVEYLWNYKKVQDQELYLVKWKYYPDSESTWEPRHHLKCNNLLKQFHLDLERELLRRAKAAGTKKTAVRCPRRLDQSLSHYLVLKAKQRKRLRQWAQQLNAKRSHLGLILVENEVDLEGPPRDFVYINEYRVGEGVTINRISAGCKCRDCFSDEGGCCPGAFQHKKAYNNEGQVKVKPGFPIYECNSCCRCGPSCPNRVVQKGIQYKFCIFRTSDGRGWGVRTLEKIRKNSFVMEYVGEIITSEEAERRGQIYDRQGTTYLFDLDYVEDVYTVDAARYGNISHFVNHSCKPNLQVYNVFIDNLDERLPRIAFFATRTIRTGEELTFDYNMQVDPVDVESSKMDSNFGIAGLPASPKKRVRVECKCGVSSCRKYLF</sequence>
<reference key="1">
    <citation type="submission" date="2004-05" db="EMBL/GenBank/DDBJ databases">
        <authorList>
            <consortium name="NIH - Xenopus Gene Collection (XGC) project"/>
        </authorList>
    </citation>
    <scope>NUCLEOTIDE SEQUENCE [LARGE SCALE MRNA]</scope>
    <source>
        <tissue>Oocyte</tissue>
    </source>
</reference>
<feature type="chain" id="PRO_0000281812" description="Histone-lysine N-methyltransferase SUV39H1">
    <location>
        <begin position="1"/>
        <end position="421"/>
    </location>
</feature>
<feature type="domain" description="Chromo" evidence="3">
    <location>
        <begin position="46"/>
        <end position="104"/>
    </location>
</feature>
<feature type="domain" description="Pre-SET" evidence="5">
    <location>
        <begin position="189"/>
        <end position="249"/>
    </location>
</feature>
<feature type="domain" description="SET" evidence="6">
    <location>
        <begin position="252"/>
        <end position="375"/>
    </location>
</feature>
<feature type="domain" description="Post-SET" evidence="4">
    <location>
        <begin position="405"/>
        <end position="421"/>
    </location>
</feature>
<feature type="binding site" evidence="1">
    <location>
        <position position="191"/>
    </location>
    <ligand>
        <name>Zn(2+)</name>
        <dbReference type="ChEBI" id="CHEBI:29105"/>
        <label>1</label>
    </ligand>
</feature>
<feature type="binding site" evidence="1">
    <location>
        <position position="191"/>
    </location>
    <ligand>
        <name>Zn(2+)</name>
        <dbReference type="ChEBI" id="CHEBI:29105"/>
        <label>2</label>
    </ligand>
</feature>
<feature type="binding site" evidence="1">
    <location>
        <position position="193"/>
    </location>
    <ligand>
        <name>Zn(2+)</name>
        <dbReference type="ChEBI" id="CHEBI:29105"/>
        <label>1</label>
    </ligand>
</feature>
<feature type="binding site" evidence="1">
    <location>
        <position position="196"/>
    </location>
    <ligand>
        <name>Zn(2+)</name>
        <dbReference type="ChEBI" id="CHEBI:29105"/>
        <label>1</label>
    </ligand>
</feature>
<feature type="binding site" evidence="1">
    <location>
        <position position="196"/>
    </location>
    <ligand>
        <name>Zn(2+)</name>
        <dbReference type="ChEBI" id="CHEBI:29105"/>
        <label>3</label>
    </ligand>
</feature>
<feature type="binding site" evidence="1">
    <location>
        <position position="203"/>
    </location>
    <ligand>
        <name>Zn(2+)</name>
        <dbReference type="ChEBI" id="CHEBI:29105"/>
        <label>1</label>
    </ligand>
</feature>
<feature type="binding site" evidence="1">
    <location>
        <position position="204"/>
    </location>
    <ligand>
        <name>Zn(2+)</name>
        <dbReference type="ChEBI" id="CHEBI:29105"/>
        <label>1</label>
    </ligand>
</feature>
<feature type="binding site" evidence="1">
    <location>
        <position position="204"/>
    </location>
    <ligand>
        <name>Zn(2+)</name>
        <dbReference type="ChEBI" id="CHEBI:29105"/>
        <label>2</label>
    </ligand>
</feature>
<feature type="binding site" evidence="1">
    <location>
        <position position="231"/>
    </location>
    <ligand>
        <name>Zn(2+)</name>
        <dbReference type="ChEBI" id="CHEBI:29105"/>
        <label>2</label>
    </ligand>
</feature>
<feature type="binding site" evidence="1">
    <location>
        <position position="231"/>
    </location>
    <ligand>
        <name>Zn(2+)</name>
        <dbReference type="ChEBI" id="CHEBI:29105"/>
        <label>3</label>
    </ligand>
</feature>
<feature type="binding site" evidence="1">
    <location>
        <position position="235"/>
    </location>
    <ligand>
        <name>Zn(2+)</name>
        <dbReference type="ChEBI" id="CHEBI:29105"/>
        <label>2</label>
    </ligand>
</feature>
<feature type="binding site" evidence="1">
    <location>
        <position position="237"/>
    </location>
    <ligand>
        <name>Zn(2+)</name>
        <dbReference type="ChEBI" id="CHEBI:29105"/>
        <label>3</label>
    </ligand>
</feature>
<feature type="binding site" evidence="1">
    <location>
        <position position="241"/>
    </location>
    <ligand>
        <name>Zn(2+)</name>
        <dbReference type="ChEBI" id="CHEBI:29105"/>
        <label>3</label>
    </ligand>
</feature>
<feature type="binding site" evidence="1">
    <location>
        <begin position="263"/>
        <end position="265"/>
    </location>
    <ligand>
        <name>S-adenosyl-L-methionine</name>
        <dbReference type="ChEBI" id="CHEBI:59789"/>
    </ligand>
</feature>
<feature type="binding site" evidence="6">
    <location>
        <position position="306"/>
    </location>
    <ligand>
        <name>S-adenosyl-L-methionine</name>
        <dbReference type="ChEBI" id="CHEBI:59789"/>
    </ligand>
</feature>
<feature type="binding site" evidence="1">
    <location>
        <begin position="332"/>
        <end position="333"/>
    </location>
    <ligand>
        <name>S-adenosyl-L-methionine</name>
        <dbReference type="ChEBI" id="CHEBI:59789"/>
    </ligand>
</feature>
<feature type="binding site" evidence="1">
    <location>
        <position position="335"/>
    </location>
    <ligand>
        <name>Zn(2+)</name>
        <dbReference type="ChEBI" id="CHEBI:29105"/>
        <label>4</label>
    </ligand>
</feature>
<feature type="binding site" evidence="1">
    <location>
        <position position="409"/>
    </location>
    <ligand>
        <name>Zn(2+)</name>
        <dbReference type="ChEBI" id="CHEBI:29105"/>
        <label>4</label>
    </ligand>
</feature>
<feature type="binding site" evidence="1">
    <location>
        <position position="411"/>
    </location>
    <ligand>
        <name>Zn(2+)</name>
        <dbReference type="ChEBI" id="CHEBI:29105"/>
        <label>4</label>
    </ligand>
</feature>
<feature type="binding site" evidence="1">
    <location>
        <position position="416"/>
    </location>
    <ligand>
        <name>Zn(2+)</name>
        <dbReference type="ChEBI" id="CHEBI:29105"/>
        <label>4</label>
    </ligand>
</feature>
<keyword id="KW-0131">Cell cycle</keyword>
<keyword id="KW-0137">Centromere</keyword>
<keyword id="KW-0156">Chromatin regulator</keyword>
<keyword id="KW-0158">Chromosome</keyword>
<keyword id="KW-0221">Differentiation</keyword>
<keyword id="KW-0479">Metal-binding</keyword>
<keyword id="KW-0489">Methyltransferase</keyword>
<keyword id="KW-0539">Nucleus</keyword>
<keyword id="KW-1185">Reference proteome</keyword>
<keyword id="KW-0678">Repressor</keyword>
<keyword id="KW-0949">S-adenosyl-L-methionine</keyword>
<keyword id="KW-0804">Transcription</keyword>
<keyword id="KW-0805">Transcription regulation</keyword>
<keyword id="KW-0808">Transferase</keyword>
<keyword id="KW-0862">Zinc</keyword>
<protein>
    <recommendedName>
        <fullName>Histone-lysine N-methyltransferase SUV39H1</fullName>
        <ecNumber evidence="2">2.1.1.355</ecNumber>
    </recommendedName>
    <alternativeName>
        <fullName>Suppressor of variegation 3-9 homolog 1</fullName>
        <shortName>Su(var)3-9 homolog 1</shortName>
    </alternativeName>
</protein>
<gene>
    <name type="primary">suv39h1</name>
</gene>
<accession>Q6NRE8</accession>
<name>SUV91_XENLA</name>
<comment type="function">
    <text evidence="1">Histone methyltransferase that specifically trimethylates 'Lys-9' of histone H3 using monomethylated H3 'Lys-9' as substrate. H3 'Lys-9' trimethylation represents a specific tag for epigenetic transcriptional repression by recruiting HP1 (CBX1, CBX3 and/or CBX5) proteins to methylated histones. Mainly functions in heterochromatin regions, thereby playing a central role in the establishment of constitutive heterochromatin at pericentric and telomere regions. H3 'Lys-9' trimethylation is also required to direct DNA methylation at pericentric repeats. SUV39H1 is targeted to histone H3 via its interaction with RB1 and is involved in many processes (By similarity).</text>
</comment>
<comment type="catalytic activity">
    <reaction evidence="2 7">
        <text>L-lysyl(9)-[histone H3] + 3 S-adenosyl-L-methionine = N(6),N(6),N(6)-trimethyl-L-lysyl(9)-[histone H3] + 3 S-adenosyl-L-homocysteine + 3 H(+)</text>
        <dbReference type="Rhea" id="RHEA:60276"/>
        <dbReference type="Rhea" id="RHEA-COMP:15538"/>
        <dbReference type="Rhea" id="RHEA-COMP:15546"/>
        <dbReference type="ChEBI" id="CHEBI:15378"/>
        <dbReference type="ChEBI" id="CHEBI:29969"/>
        <dbReference type="ChEBI" id="CHEBI:57856"/>
        <dbReference type="ChEBI" id="CHEBI:59789"/>
        <dbReference type="ChEBI" id="CHEBI:61961"/>
        <dbReference type="EC" id="2.1.1.355"/>
    </reaction>
</comment>
<comment type="subcellular location">
    <subcellularLocation>
        <location evidence="1">Nucleus</location>
    </subcellularLocation>
    <subcellularLocation>
        <location evidence="1">Chromosome</location>
        <location evidence="1">Centromere</location>
    </subcellularLocation>
    <text evidence="1">Associates with centromeric constitutive heterochromatin.</text>
</comment>
<comment type="domain">
    <text evidence="1">Although the SET domain contains the active site of enzymatic activity, both pre-SET and post-SET domains are required for methyltransferase activity. The SET domain also participates in stable binding to heterochromatin (By similarity).</text>
</comment>
<comment type="domain">
    <text evidence="1">In the pre-SET domain, Cys residues bind 3 zinc ions that are arranged in a triangular cluster; some of these Cys residues contribute to the binding of two zinc ions within the cluster.</text>
</comment>
<comment type="similarity">
    <text evidence="7">Belongs to the class V-like SAM-binding methyltransferase superfamily. Histone-lysine methyltransferase family. Suvar3-9 subfamily.</text>
</comment>
<evidence type="ECO:0000250" key="1"/>
<evidence type="ECO:0000250" key="2">
    <source>
        <dbReference type="UniProtKB" id="O43463"/>
    </source>
</evidence>
<evidence type="ECO:0000255" key="3">
    <source>
        <dbReference type="PROSITE-ProRule" id="PRU00053"/>
    </source>
</evidence>
<evidence type="ECO:0000255" key="4">
    <source>
        <dbReference type="PROSITE-ProRule" id="PRU00155"/>
    </source>
</evidence>
<evidence type="ECO:0000255" key="5">
    <source>
        <dbReference type="PROSITE-ProRule" id="PRU00157"/>
    </source>
</evidence>
<evidence type="ECO:0000255" key="6">
    <source>
        <dbReference type="PROSITE-ProRule" id="PRU00190"/>
    </source>
</evidence>
<evidence type="ECO:0000255" key="7">
    <source>
        <dbReference type="PROSITE-ProRule" id="PRU00912"/>
    </source>
</evidence>
<dbReference type="EC" id="2.1.1.355" evidence="2"/>
<dbReference type="EMBL" id="BC070805">
    <property type="protein sequence ID" value="AAH70805.1"/>
    <property type="molecule type" value="mRNA"/>
</dbReference>
<dbReference type="RefSeq" id="NP_001084892.1">
    <property type="nucleotide sequence ID" value="NM_001091423.1"/>
</dbReference>
<dbReference type="SMR" id="Q6NRE8"/>
<dbReference type="BioGRID" id="101309">
    <property type="interactions" value="1"/>
</dbReference>
<dbReference type="DNASU" id="431943"/>
<dbReference type="GeneID" id="431943"/>
<dbReference type="KEGG" id="xla:431943"/>
<dbReference type="AGR" id="Xenbase:XB-GENE-6049313"/>
<dbReference type="CTD" id="431943"/>
<dbReference type="Xenbase" id="XB-GENE-6049313">
    <property type="gene designation" value="suv39h1.L"/>
</dbReference>
<dbReference type="OrthoDB" id="308383at2759"/>
<dbReference type="Proteomes" id="UP000186698">
    <property type="component" value="Chromosome 8L"/>
</dbReference>
<dbReference type="Bgee" id="431943">
    <property type="expression patterns" value="Expressed in egg cell and 14 other cell types or tissues"/>
</dbReference>
<dbReference type="GO" id="GO:0000775">
    <property type="term" value="C:chromosome, centromeric region"/>
    <property type="evidence" value="ECO:0007669"/>
    <property type="project" value="UniProtKB-SubCell"/>
</dbReference>
<dbReference type="GO" id="GO:0005634">
    <property type="term" value="C:nucleus"/>
    <property type="evidence" value="ECO:0000318"/>
    <property type="project" value="GO_Central"/>
</dbReference>
<dbReference type="GO" id="GO:0046974">
    <property type="term" value="F:histone H3K9 methyltransferase activity"/>
    <property type="evidence" value="ECO:0000318"/>
    <property type="project" value="GO_Central"/>
</dbReference>
<dbReference type="GO" id="GO:0140949">
    <property type="term" value="F:histone H3K9 trimethyltransferase activity"/>
    <property type="evidence" value="ECO:0007669"/>
    <property type="project" value="UniProtKB-EC"/>
</dbReference>
<dbReference type="GO" id="GO:0008270">
    <property type="term" value="F:zinc ion binding"/>
    <property type="evidence" value="ECO:0007669"/>
    <property type="project" value="InterPro"/>
</dbReference>
<dbReference type="GO" id="GO:0030154">
    <property type="term" value="P:cell differentiation"/>
    <property type="evidence" value="ECO:0007669"/>
    <property type="project" value="UniProtKB-KW"/>
</dbReference>
<dbReference type="GO" id="GO:0032259">
    <property type="term" value="P:methylation"/>
    <property type="evidence" value="ECO:0007669"/>
    <property type="project" value="UniProtKB-KW"/>
</dbReference>
<dbReference type="CDD" id="cd18639">
    <property type="entry name" value="CD_SUV39H1_like"/>
    <property type="match status" value="1"/>
</dbReference>
<dbReference type="CDD" id="cd10525">
    <property type="entry name" value="SET_SUV39H1"/>
    <property type="match status" value="1"/>
</dbReference>
<dbReference type="FunFam" id="2.170.270.10:FF:000008">
    <property type="entry name" value="Histone-lysine N-methyltransferase"/>
    <property type="match status" value="1"/>
</dbReference>
<dbReference type="Gene3D" id="2.40.50.40">
    <property type="match status" value="1"/>
</dbReference>
<dbReference type="Gene3D" id="2.170.270.10">
    <property type="entry name" value="SET domain"/>
    <property type="match status" value="1"/>
</dbReference>
<dbReference type="InterPro" id="IPR016197">
    <property type="entry name" value="Chromo-like_dom_sf"/>
</dbReference>
<dbReference type="InterPro" id="IPR000953">
    <property type="entry name" value="Chromo/chromo_shadow_dom"/>
</dbReference>
<dbReference type="InterPro" id="IPR023780">
    <property type="entry name" value="Chromo_domain"/>
</dbReference>
<dbReference type="InterPro" id="IPR011381">
    <property type="entry name" value="H3-K9_MeTrfase_SUV39H1/2-like"/>
</dbReference>
<dbReference type="InterPro" id="IPR050973">
    <property type="entry name" value="H3K9_Histone-Lys_N-MTase"/>
</dbReference>
<dbReference type="InterPro" id="IPR003616">
    <property type="entry name" value="Post-SET_dom"/>
</dbReference>
<dbReference type="InterPro" id="IPR007728">
    <property type="entry name" value="Pre-SET_dom"/>
</dbReference>
<dbReference type="InterPro" id="IPR001214">
    <property type="entry name" value="SET_dom"/>
</dbReference>
<dbReference type="InterPro" id="IPR046341">
    <property type="entry name" value="SET_dom_sf"/>
</dbReference>
<dbReference type="PANTHER" id="PTHR46223">
    <property type="entry name" value="HISTONE-LYSINE N-METHYLTRANSFERASE SUV39H"/>
    <property type="match status" value="1"/>
</dbReference>
<dbReference type="PANTHER" id="PTHR46223:SF1">
    <property type="entry name" value="HISTONE-LYSINE N-METHYLTRANSFERASE SUV39H1"/>
    <property type="match status" value="1"/>
</dbReference>
<dbReference type="Pfam" id="PF00385">
    <property type="entry name" value="Chromo"/>
    <property type="match status" value="1"/>
</dbReference>
<dbReference type="Pfam" id="PF05033">
    <property type="entry name" value="Pre-SET"/>
    <property type="match status" value="1"/>
</dbReference>
<dbReference type="Pfam" id="PF00856">
    <property type="entry name" value="SET"/>
    <property type="match status" value="1"/>
</dbReference>
<dbReference type="PIRSF" id="PIRSF009343">
    <property type="entry name" value="SUV39_SET"/>
    <property type="match status" value="1"/>
</dbReference>
<dbReference type="SMART" id="SM00298">
    <property type="entry name" value="CHROMO"/>
    <property type="match status" value="1"/>
</dbReference>
<dbReference type="SMART" id="SM00468">
    <property type="entry name" value="PreSET"/>
    <property type="match status" value="1"/>
</dbReference>
<dbReference type="SMART" id="SM00317">
    <property type="entry name" value="SET"/>
    <property type="match status" value="1"/>
</dbReference>
<dbReference type="SUPFAM" id="SSF54160">
    <property type="entry name" value="Chromo domain-like"/>
    <property type="match status" value="1"/>
</dbReference>
<dbReference type="SUPFAM" id="SSF82199">
    <property type="entry name" value="SET domain"/>
    <property type="match status" value="1"/>
</dbReference>
<dbReference type="PROSITE" id="PS50013">
    <property type="entry name" value="CHROMO_2"/>
    <property type="match status" value="1"/>
</dbReference>
<dbReference type="PROSITE" id="PS50868">
    <property type="entry name" value="POST_SET"/>
    <property type="match status" value="1"/>
</dbReference>
<dbReference type="PROSITE" id="PS50867">
    <property type="entry name" value="PRE_SET"/>
    <property type="match status" value="1"/>
</dbReference>
<dbReference type="PROSITE" id="PS51579">
    <property type="entry name" value="SAM_MT43_SUVAR39_3"/>
    <property type="match status" value="1"/>
</dbReference>
<dbReference type="PROSITE" id="PS50280">
    <property type="entry name" value="SET"/>
    <property type="match status" value="1"/>
</dbReference>
<organism>
    <name type="scientific">Xenopus laevis</name>
    <name type="common">African clawed frog</name>
    <dbReference type="NCBI Taxonomy" id="8355"/>
    <lineage>
        <taxon>Eukaryota</taxon>
        <taxon>Metazoa</taxon>
        <taxon>Chordata</taxon>
        <taxon>Craniata</taxon>
        <taxon>Vertebrata</taxon>
        <taxon>Euteleostomi</taxon>
        <taxon>Amphibia</taxon>
        <taxon>Batrachia</taxon>
        <taxon>Anura</taxon>
        <taxon>Pipoidea</taxon>
        <taxon>Pipidae</taxon>
        <taxon>Xenopodinae</taxon>
        <taxon>Xenopus</taxon>
        <taxon>Xenopus</taxon>
    </lineage>
</organism>
<proteinExistence type="evidence at transcript level"/>